<protein>
    <recommendedName>
        <fullName>Protein kinase OspG</fullName>
        <ecNumber>2.7.-.-</ecNumber>
    </recommendedName>
    <alternativeName>
        <fullName>Effector protein OspG</fullName>
    </alternativeName>
</protein>
<dbReference type="EC" id="2.7.-.-"/>
<dbReference type="EMBL" id="CP000039">
    <property type="protein sequence ID" value="AAZ91190.1"/>
    <property type="molecule type" value="Genomic_DNA"/>
</dbReference>
<dbReference type="RefSeq" id="WP_000705601.1">
    <property type="nucleotide sequence ID" value="NC_007385.1"/>
</dbReference>
<dbReference type="PDB" id="4Q5E">
    <property type="method" value="X-ray"/>
    <property type="resolution" value="1.87 A"/>
    <property type="chains" value="A=26-196"/>
</dbReference>
<dbReference type="PDB" id="4Q5H">
    <property type="method" value="X-ray"/>
    <property type="resolution" value="2.00 A"/>
    <property type="chains" value="A=26-196"/>
</dbReference>
<dbReference type="PDBsum" id="4Q5E"/>
<dbReference type="PDBsum" id="4Q5H"/>
<dbReference type="SMR" id="Q3YTH2"/>
<dbReference type="KEGG" id="ssn:SSON_P170"/>
<dbReference type="HOGENOM" id="CLU_120872_0_0_6"/>
<dbReference type="EvolutionaryTrace" id="Q3YTH2"/>
<dbReference type="Proteomes" id="UP000002529">
    <property type="component" value="Plasmid pSS_046"/>
</dbReference>
<dbReference type="GO" id="GO:0005615">
    <property type="term" value="C:extracellular space"/>
    <property type="evidence" value="ECO:0000250"/>
    <property type="project" value="UniProtKB"/>
</dbReference>
<dbReference type="GO" id="GO:0043657">
    <property type="term" value="C:host cell"/>
    <property type="evidence" value="ECO:0007669"/>
    <property type="project" value="UniProtKB-SubCell"/>
</dbReference>
<dbReference type="GO" id="GO:0016301">
    <property type="term" value="F:kinase activity"/>
    <property type="evidence" value="ECO:0000250"/>
    <property type="project" value="UniProtKB"/>
</dbReference>
<dbReference type="GO" id="GO:0046777">
    <property type="term" value="P:protein autophosphorylation"/>
    <property type="evidence" value="ECO:0000250"/>
    <property type="project" value="UniProtKB"/>
</dbReference>
<dbReference type="Gene3D" id="3.30.200.20">
    <property type="entry name" value="Phosphorylase Kinase, domain 1"/>
    <property type="match status" value="1"/>
</dbReference>
<dbReference type="Gene3D" id="1.10.510.10">
    <property type="entry name" value="Transferase(Phosphotransferase) domain 1"/>
    <property type="match status" value="1"/>
</dbReference>
<dbReference type="InterPro" id="IPR011009">
    <property type="entry name" value="Kinase-like_dom_sf"/>
</dbReference>
<dbReference type="InterPro" id="IPR054466">
    <property type="entry name" value="OspG_kinase"/>
</dbReference>
<dbReference type="Pfam" id="PF22303">
    <property type="entry name" value="OspG_kinase"/>
    <property type="match status" value="1"/>
</dbReference>
<dbReference type="SUPFAM" id="SSF56112">
    <property type="entry name" value="Protein kinase-like (PK-like)"/>
    <property type="match status" value="1"/>
</dbReference>
<geneLocation type="plasmid">
    <name>pSS_046</name>
</geneLocation>
<sequence length="196" mass="22570">MKITSTIIQTPFPFENNNSHAGIVTEPILGKLIGQGSTAEIFEDVNDSSALYKKYDLIGNQYNEILEMAWQESELFNAFYGDEASVVIQYGGDVYLRMLRVPGTPLSDIDTADIPDNIESLYLQLICKLNELSIIHYDLNTGNMLYDKESESLFPIDFRNIYAEYYAATKKDKEIIDRRLQMRTNDFYSLLNRKYL</sequence>
<keyword id="KW-0002">3D-structure</keyword>
<keyword id="KW-0418">Kinase</keyword>
<keyword id="KW-0597">Phosphoprotein</keyword>
<keyword id="KW-0614">Plasmid</keyword>
<keyword id="KW-1185">Reference proteome</keyword>
<keyword id="KW-0964">Secreted</keyword>
<keyword id="KW-0808">Transferase</keyword>
<keyword id="KW-0843">Virulence</keyword>
<gene>
    <name type="primary">ospG</name>
    <name type="ordered locus">SSON_P170</name>
</gene>
<evidence type="ECO:0000250" key="1"/>
<evidence type="ECO:0000305" key="2"/>
<evidence type="ECO:0007829" key="3">
    <source>
        <dbReference type="PDB" id="4Q5E"/>
    </source>
</evidence>
<name>OSPG_SHISS</name>
<organism>
    <name type="scientific">Shigella sonnei (strain Ss046)</name>
    <dbReference type="NCBI Taxonomy" id="300269"/>
    <lineage>
        <taxon>Bacteria</taxon>
        <taxon>Pseudomonadati</taxon>
        <taxon>Pseudomonadota</taxon>
        <taxon>Gammaproteobacteria</taxon>
        <taxon>Enterobacterales</taxon>
        <taxon>Enterobacteriaceae</taxon>
        <taxon>Shigella</taxon>
    </lineage>
</organism>
<comment type="function">
    <text evidence="1">Effector proteins function to alter host cell physiology and promote bacterial survival in host tissues. This protein is a kinase that is involved in down-regulation of the host innate response induced by invasive bacteria (By similarity).</text>
</comment>
<comment type="subcellular location">
    <subcellularLocation>
        <location evidence="1">Secreted</location>
    </subcellularLocation>
    <subcellularLocation>
        <location evidence="1">Host cell</location>
    </subcellularLocation>
    <text evidence="1">Secreted via Mxi-Spa type III secretion system (T3SS), and delivered into the host cell.</text>
</comment>
<comment type="PTM">
    <text evidence="1">Autophosphorylated.</text>
</comment>
<comment type="similarity">
    <text evidence="2">Belongs to the protein kinase superfamily.</text>
</comment>
<reference key="1">
    <citation type="journal article" date="2005" name="Nucleic Acids Res.">
        <title>Genome dynamics and diversity of Shigella species, the etiologic agents of bacillary dysentery.</title>
        <authorList>
            <person name="Yang F."/>
            <person name="Yang J."/>
            <person name="Zhang X."/>
            <person name="Chen L."/>
            <person name="Jiang Y."/>
            <person name="Yan Y."/>
            <person name="Tang X."/>
            <person name="Wang J."/>
            <person name="Xiong Z."/>
            <person name="Dong J."/>
            <person name="Xue Y."/>
            <person name="Zhu Y."/>
            <person name="Xu X."/>
            <person name="Sun L."/>
            <person name="Chen S."/>
            <person name="Nie H."/>
            <person name="Peng J."/>
            <person name="Xu J."/>
            <person name="Wang Y."/>
            <person name="Yuan Z."/>
            <person name="Wen Y."/>
            <person name="Yao Z."/>
            <person name="Shen Y."/>
            <person name="Qiang B."/>
            <person name="Hou Y."/>
            <person name="Yu J."/>
            <person name="Jin Q."/>
        </authorList>
    </citation>
    <scope>NUCLEOTIDE SEQUENCE [LARGE SCALE GENOMIC DNA]</scope>
    <source>
        <strain>Ss046</strain>
    </source>
</reference>
<reference key="2">
    <citation type="journal article" date="2005" name="Plasmid">
        <title>The complete sequence and analysis of the large virulence plasmid pSS of Shigella sonnei.</title>
        <authorList>
            <person name="Jiang Y."/>
            <person name="Yang F."/>
            <person name="Zhang X."/>
            <person name="Yang J."/>
            <person name="Chen L."/>
            <person name="Yan Y."/>
            <person name="Nie H."/>
            <person name="Xiong Z."/>
            <person name="Wang J."/>
            <person name="Dong J."/>
            <person name="Xue Y."/>
            <person name="Xu X."/>
            <person name="Zhu Y."/>
            <person name="Chen S."/>
            <person name="Jin Q."/>
        </authorList>
    </citation>
    <scope>NUCLEOTIDE SEQUENCE [LARGE SCALE GENOMIC DNA]</scope>
    <source>
        <strain>Ss046</strain>
    </source>
</reference>
<feature type="chain" id="PRO_0000395880" description="Protein kinase OspG">
    <location>
        <begin position="1"/>
        <end position="196"/>
    </location>
</feature>
<feature type="strand" evidence="3">
    <location>
        <begin position="29"/>
        <end position="35"/>
    </location>
</feature>
<feature type="strand" evidence="3">
    <location>
        <begin position="37"/>
        <end position="44"/>
    </location>
</feature>
<feature type="strand" evidence="3">
    <location>
        <begin position="47"/>
        <end position="55"/>
    </location>
</feature>
<feature type="helix" evidence="3">
    <location>
        <begin position="62"/>
        <end position="80"/>
    </location>
</feature>
<feature type="strand" evidence="3">
    <location>
        <begin position="84"/>
        <end position="90"/>
    </location>
</feature>
<feature type="strand" evidence="3">
    <location>
        <begin position="93"/>
        <end position="99"/>
    </location>
</feature>
<feature type="strand" evidence="3">
    <location>
        <begin position="103"/>
        <end position="105"/>
    </location>
</feature>
<feature type="helix" evidence="3">
    <location>
        <begin position="106"/>
        <end position="108"/>
    </location>
</feature>
<feature type="helix" evidence="3">
    <location>
        <begin position="111"/>
        <end position="113"/>
    </location>
</feature>
<feature type="helix" evidence="3">
    <location>
        <begin position="118"/>
        <end position="131"/>
    </location>
</feature>
<feature type="helix" evidence="3">
    <location>
        <begin position="141"/>
        <end position="143"/>
    </location>
</feature>
<feature type="strand" evidence="3">
    <location>
        <begin position="144"/>
        <end position="147"/>
    </location>
</feature>
<feature type="turn" evidence="3">
    <location>
        <begin position="148"/>
        <end position="151"/>
    </location>
</feature>
<feature type="strand" evidence="3">
    <location>
        <begin position="152"/>
        <end position="155"/>
    </location>
</feature>
<feature type="helix" evidence="3">
    <location>
        <begin position="162"/>
        <end position="167"/>
    </location>
</feature>
<feature type="helix" evidence="3">
    <location>
        <begin position="170"/>
        <end position="191"/>
    </location>
</feature>
<accession>Q3YTH2</accession>
<proteinExistence type="evidence at protein level"/>